<reference key="1">
    <citation type="journal article" date="1996" name="Science">
        <title>Complete genome sequence of the methanogenic archaeon, Methanococcus jannaschii.</title>
        <authorList>
            <person name="Bult C.J."/>
            <person name="White O."/>
            <person name="Olsen G.J."/>
            <person name="Zhou L."/>
            <person name="Fleischmann R.D."/>
            <person name="Sutton G.G."/>
            <person name="Blake J.A."/>
            <person name="FitzGerald L.M."/>
            <person name="Clayton R.A."/>
            <person name="Gocayne J.D."/>
            <person name="Kerlavage A.R."/>
            <person name="Dougherty B.A."/>
            <person name="Tomb J.-F."/>
            <person name="Adams M.D."/>
            <person name="Reich C.I."/>
            <person name="Overbeek R."/>
            <person name="Kirkness E.F."/>
            <person name="Weinstock K.G."/>
            <person name="Merrick J.M."/>
            <person name="Glodek A."/>
            <person name="Scott J.L."/>
            <person name="Geoghagen N.S.M."/>
            <person name="Weidman J.F."/>
            <person name="Fuhrmann J.L."/>
            <person name="Nguyen D."/>
            <person name="Utterback T.R."/>
            <person name="Kelley J.M."/>
            <person name="Peterson J.D."/>
            <person name="Sadow P.W."/>
            <person name="Hanna M.C."/>
            <person name="Cotton M.D."/>
            <person name="Roberts K.M."/>
            <person name="Hurst M.A."/>
            <person name="Kaine B.P."/>
            <person name="Borodovsky M."/>
            <person name="Klenk H.-P."/>
            <person name="Fraser C.M."/>
            <person name="Smith H.O."/>
            <person name="Woese C.R."/>
            <person name="Venter J.C."/>
        </authorList>
    </citation>
    <scope>NUCLEOTIDE SEQUENCE [LARGE SCALE GENOMIC DNA]</scope>
    <source>
        <strain>ATCC 43067 / DSM 2661 / JAL-1 / JCM 10045 / NBRC 100440</strain>
    </source>
</reference>
<feature type="chain" id="PRO_0000172734" description="Uncharacterized protein MJ0573">
    <location>
        <begin position="1"/>
        <end position="189"/>
    </location>
</feature>
<organism>
    <name type="scientific">Methanocaldococcus jannaschii (strain ATCC 43067 / DSM 2661 / JAL-1 / JCM 10045 / NBRC 100440)</name>
    <name type="common">Methanococcus jannaschii</name>
    <dbReference type="NCBI Taxonomy" id="243232"/>
    <lineage>
        <taxon>Archaea</taxon>
        <taxon>Methanobacteriati</taxon>
        <taxon>Methanobacteriota</taxon>
        <taxon>Methanomada group</taxon>
        <taxon>Methanococci</taxon>
        <taxon>Methanococcales</taxon>
        <taxon>Methanocaldococcaceae</taxon>
        <taxon>Methanocaldococcus</taxon>
    </lineage>
</organism>
<keyword id="KW-1185">Reference proteome</keyword>
<protein>
    <recommendedName>
        <fullName>Uncharacterized protein MJ0573</fullName>
    </recommendedName>
</protein>
<proteinExistence type="inferred from homology"/>
<comment type="similarity">
    <text evidence="1">Belongs to the OsmC/Ohr family.</text>
</comment>
<evidence type="ECO:0000305" key="1"/>
<gene>
    <name type="ordered locus">MJ0573</name>
</gene>
<dbReference type="EMBL" id="L77117">
    <property type="protein sequence ID" value="AAB98573.1"/>
    <property type="molecule type" value="Genomic_DNA"/>
</dbReference>
<dbReference type="PIR" id="E64371">
    <property type="entry name" value="E64371"/>
</dbReference>
<dbReference type="RefSeq" id="WP_010870077.1">
    <property type="nucleotide sequence ID" value="NC_000909.1"/>
</dbReference>
<dbReference type="SMR" id="Q57993"/>
<dbReference type="STRING" id="243232.MJ_0573"/>
<dbReference type="PaxDb" id="243232-MJ_0573"/>
<dbReference type="EnsemblBacteria" id="AAB98573">
    <property type="protein sequence ID" value="AAB98573"/>
    <property type="gene ID" value="MJ_0573"/>
</dbReference>
<dbReference type="GeneID" id="1451438"/>
<dbReference type="KEGG" id="mja:MJ_0573"/>
<dbReference type="eggNOG" id="arCOG03686">
    <property type="taxonomic scope" value="Archaea"/>
</dbReference>
<dbReference type="HOGENOM" id="CLU_1431650_0_0_2"/>
<dbReference type="InParanoid" id="Q57993"/>
<dbReference type="OrthoDB" id="62722at2157"/>
<dbReference type="Proteomes" id="UP000000805">
    <property type="component" value="Chromosome"/>
</dbReference>
<dbReference type="Gene3D" id="3.30.300.20">
    <property type="match status" value="1"/>
</dbReference>
<dbReference type="InterPro" id="IPR015946">
    <property type="entry name" value="KH_dom-like_a/b"/>
</dbReference>
<dbReference type="InterPro" id="IPR003718">
    <property type="entry name" value="OsmC/Ohr_fam"/>
</dbReference>
<dbReference type="InterPro" id="IPR036102">
    <property type="entry name" value="OsmC/Ohrsf"/>
</dbReference>
<dbReference type="Pfam" id="PF02566">
    <property type="entry name" value="OsmC"/>
    <property type="match status" value="1"/>
</dbReference>
<dbReference type="SUPFAM" id="SSF82784">
    <property type="entry name" value="OsmC-like"/>
    <property type="match status" value="1"/>
</dbReference>
<accession>Q57993</accession>
<sequence length="189" mass="21198">MNPEMIMEMMNSDIAKEMAPKMMPKMMPLALEKFLQYIPENERKEFIARIVDIIVSKDENKEVSAEYLDMFEALLNVKGLKIHSRGGKGAIKEKISPMDLFLAGLCGCVCIAVGNTLKANNIDAEIKVDGKVEKSFEEGKIKKVIINIYVKVDGDIDKEKLKKLVLEGSKKCLISNSISCEIEKNVILE</sequence>
<name>Y573_METJA</name>